<gene>
    <name type="primary">PAR2</name>
    <name type="synonym">BHLH166</name>
    <name type="synonym">HLH2</name>
    <name type="ordered locus">At3g58850</name>
    <name type="ORF">T20N10.200</name>
</gene>
<sequence length="118" mass="12872">MEKTLATSHTKRSSPPSPSSAVNTSSTGFNRRTRQRLSDATASVSETDVEDEDEDEEGVEEKIEALQTIVPGGTELGVDALFEETASYILALQCQINAIKVLTTFLERCEKKDMKFGG</sequence>
<name>PAR2_ARATH</name>
<organism>
    <name type="scientific">Arabidopsis thaliana</name>
    <name type="common">Mouse-ear cress</name>
    <dbReference type="NCBI Taxonomy" id="3702"/>
    <lineage>
        <taxon>Eukaryota</taxon>
        <taxon>Viridiplantae</taxon>
        <taxon>Streptophyta</taxon>
        <taxon>Embryophyta</taxon>
        <taxon>Tracheophyta</taxon>
        <taxon>Spermatophyta</taxon>
        <taxon>Magnoliopsida</taxon>
        <taxon>eudicotyledons</taxon>
        <taxon>Gunneridae</taxon>
        <taxon>Pentapetalae</taxon>
        <taxon>rosids</taxon>
        <taxon>malvids</taxon>
        <taxon>Brassicales</taxon>
        <taxon>Brassicaceae</taxon>
        <taxon>Camelineae</taxon>
        <taxon>Arabidopsis</taxon>
    </lineage>
</organism>
<protein>
    <recommendedName>
        <fullName>Transcription factor PAR2</fullName>
    </recommendedName>
    <alternativeName>
        <fullName>Basic helix-loop-helix protein 166</fullName>
        <shortName>AtbHLH166</shortName>
        <shortName>bHLH 166</shortName>
    </alternativeName>
    <alternativeName>
        <fullName>Protein HELIX-LOOP-HELIX 2</fullName>
    </alternativeName>
    <alternativeName>
        <fullName>Protein PHYTOCHROME RAPIDLY REGULATED 2</fullName>
    </alternativeName>
    <alternativeName>
        <fullName>bHLH transcription factor bHLH166</fullName>
    </alternativeName>
</protein>
<reference key="1">
    <citation type="submission" date="2007-11" db="EMBL/GenBank/DDBJ databases">
        <title>Role of HLH1 and HLH2 in the shade avoidance response of Arabidopsis thaliana.</title>
        <authorList>
            <person name="Cafardi V."/>
        </authorList>
    </citation>
    <scope>NUCLEOTIDE SEQUENCE [MRNA]</scope>
    <source>
        <strain>cv. Columbia</strain>
    </source>
</reference>
<reference key="2">
    <citation type="journal article" date="2000" name="Nature">
        <title>Sequence and analysis of chromosome 3 of the plant Arabidopsis thaliana.</title>
        <authorList>
            <person name="Salanoubat M."/>
            <person name="Lemcke K."/>
            <person name="Rieger M."/>
            <person name="Ansorge W."/>
            <person name="Unseld M."/>
            <person name="Fartmann B."/>
            <person name="Valle G."/>
            <person name="Bloecker H."/>
            <person name="Perez-Alonso M."/>
            <person name="Obermaier B."/>
            <person name="Delseny M."/>
            <person name="Boutry M."/>
            <person name="Grivell L.A."/>
            <person name="Mache R."/>
            <person name="Puigdomenech P."/>
            <person name="De Simone V."/>
            <person name="Choisne N."/>
            <person name="Artiguenave F."/>
            <person name="Robert C."/>
            <person name="Brottier P."/>
            <person name="Wincker P."/>
            <person name="Cattolico L."/>
            <person name="Weissenbach J."/>
            <person name="Saurin W."/>
            <person name="Quetier F."/>
            <person name="Schaefer M."/>
            <person name="Mueller-Auer S."/>
            <person name="Gabel C."/>
            <person name="Fuchs M."/>
            <person name="Benes V."/>
            <person name="Wurmbach E."/>
            <person name="Drzonek H."/>
            <person name="Erfle H."/>
            <person name="Jordan N."/>
            <person name="Bangert S."/>
            <person name="Wiedelmann R."/>
            <person name="Kranz H."/>
            <person name="Voss H."/>
            <person name="Holland R."/>
            <person name="Brandt P."/>
            <person name="Nyakatura G."/>
            <person name="Vezzi A."/>
            <person name="D'Angelo M."/>
            <person name="Pallavicini A."/>
            <person name="Toppo S."/>
            <person name="Simionati B."/>
            <person name="Conrad A."/>
            <person name="Hornischer K."/>
            <person name="Kauer G."/>
            <person name="Loehnert T.-H."/>
            <person name="Nordsiek G."/>
            <person name="Reichelt J."/>
            <person name="Scharfe M."/>
            <person name="Schoen O."/>
            <person name="Bargues M."/>
            <person name="Terol J."/>
            <person name="Climent J."/>
            <person name="Navarro P."/>
            <person name="Collado C."/>
            <person name="Perez-Perez A."/>
            <person name="Ottenwaelder B."/>
            <person name="Duchemin D."/>
            <person name="Cooke R."/>
            <person name="Laudie M."/>
            <person name="Berger-Llauro C."/>
            <person name="Purnelle B."/>
            <person name="Masuy D."/>
            <person name="de Haan M."/>
            <person name="Maarse A.C."/>
            <person name="Alcaraz J.-P."/>
            <person name="Cottet A."/>
            <person name="Casacuberta E."/>
            <person name="Monfort A."/>
            <person name="Argiriou A."/>
            <person name="Flores M."/>
            <person name="Liguori R."/>
            <person name="Vitale D."/>
            <person name="Mannhaupt G."/>
            <person name="Haase D."/>
            <person name="Schoof H."/>
            <person name="Rudd S."/>
            <person name="Zaccaria P."/>
            <person name="Mewes H.-W."/>
            <person name="Mayer K.F.X."/>
            <person name="Kaul S."/>
            <person name="Town C.D."/>
            <person name="Koo H.L."/>
            <person name="Tallon L.J."/>
            <person name="Jenkins J."/>
            <person name="Rooney T."/>
            <person name="Rizzo M."/>
            <person name="Walts A."/>
            <person name="Utterback T."/>
            <person name="Fujii C.Y."/>
            <person name="Shea T.P."/>
            <person name="Creasy T.H."/>
            <person name="Haas B."/>
            <person name="Maiti R."/>
            <person name="Wu D."/>
            <person name="Peterson J."/>
            <person name="Van Aken S."/>
            <person name="Pai G."/>
            <person name="Militscher J."/>
            <person name="Sellers P."/>
            <person name="Gill J.E."/>
            <person name="Feldblyum T.V."/>
            <person name="Preuss D."/>
            <person name="Lin X."/>
            <person name="Nierman W.C."/>
            <person name="Salzberg S.L."/>
            <person name="White O."/>
            <person name="Venter J.C."/>
            <person name="Fraser C.M."/>
            <person name="Kaneko T."/>
            <person name="Nakamura Y."/>
            <person name="Sato S."/>
            <person name="Kato T."/>
            <person name="Asamizu E."/>
            <person name="Sasamoto S."/>
            <person name="Kimura T."/>
            <person name="Idesawa K."/>
            <person name="Kawashima K."/>
            <person name="Kishida Y."/>
            <person name="Kiyokawa C."/>
            <person name="Kohara M."/>
            <person name="Matsumoto M."/>
            <person name="Matsuno A."/>
            <person name="Muraki A."/>
            <person name="Nakayama S."/>
            <person name="Nakazaki N."/>
            <person name="Shinpo S."/>
            <person name="Takeuchi C."/>
            <person name="Wada T."/>
            <person name="Watanabe A."/>
            <person name="Yamada M."/>
            <person name="Yasuda M."/>
            <person name="Tabata S."/>
        </authorList>
    </citation>
    <scope>NUCLEOTIDE SEQUENCE [LARGE SCALE GENOMIC DNA]</scope>
    <source>
        <strain>cv. Columbia</strain>
    </source>
</reference>
<reference key="3">
    <citation type="journal article" date="2017" name="Plant J.">
        <title>Araport11: a complete reannotation of the Arabidopsis thaliana reference genome.</title>
        <authorList>
            <person name="Cheng C.Y."/>
            <person name="Krishnakumar V."/>
            <person name="Chan A.P."/>
            <person name="Thibaud-Nissen F."/>
            <person name="Schobel S."/>
            <person name="Town C.D."/>
        </authorList>
    </citation>
    <scope>GENOME REANNOTATION</scope>
    <source>
        <strain>cv. Columbia</strain>
    </source>
</reference>
<reference key="4">
    <citation type="submission" date="2004-03" db="EMBL/GenBank/DDBJ databases">
        <title>Arabidopsis ORF clones.</title>
        <authorList>
            <person name="Kim C.J."/>
            <person name="Chen H."/>
            <person name="Cheuk R.F."/>
            <person name="Shinn P."/>
            <person name="Ecker J.R."/>
        </authorList>
    </citation>
    <scope>NUCLEOTIDE SEQUENCE [LARGE SCALE MRNA]</scope>
    <source>
        <strain>cv. Columbia</strain>
    </source>
</reference>
<reference key="5">
    <citation type="submission" date="2006-07" db="EMBL/GenBank/DDBJ databases">
        <title>Large-scale analysis of RIKEN Arabidopsis full-length (RAFL) cDNAs.</title>
        <authorList>
            <person name="Totoki Y."/>
            <person name="Seki M."/>
            <person name="Ishida J."/>
            <person name="Nakajima M."/>
            <person name="Enju A."/>
            <person name="Kamiya A."/>
            <person name="Narusaka M."/>
            <person name="Shin-i T."/>
            <person name="Nakagawa M."/>
            <person name="Sakamoto N."/>
            <person name="Oishi K."/>
            <person name="Kohara Y."/>
            <person name="Kobayashi M."/>
            <person name="Toyoda A."/>
            <person name="Sakaki Y."/>
            <person name="Sakurai T."/>
            <person name="Iida K."/>
            <person name="Akiyama K."/>
            <person name="Satou M."/>
            <person name="Toyoda T."/>
            <person name="Konagaya A."/>
            <person name="Carninci P."/>
            <person name="Kawai J."/>
            <person name="Hayashizaki Y."/>
            <person name="Shinozaki K."/>
        </authorList>
    </citation>
    <scope>NUCLEOTIDE SEQUENCE [LARGE SCALE MRNA]</scope>
    <source>
        <strain>cv. Columbia</strain>
    </source>
</reference>
<reference key="6">
    <citation type="journal article" date="2007" name="EMBO J.">
        <title>Interaction of shade avoidance and auxin responses: a role for two novel atypical bHLH proteins.</title>
        <authorList>
            <person name="Roig-Villanova I."/>
            <person name="Bou-Torrent J."/>
            <person name="Galstyan A."/>
            <person name="Carretero-Paulet L."/>
            <person name="Portoles S."/>
            <person name="Rodriguez-Concepcion M."/>
            <person name="Martinez-Garcia J.F."/>
        </authorList>
    </citation>
    <scope>FUNCTION</scope>
    <scope>SUBCELLULAR LOCATION</scope>
    <scope>DISRUPTION PHENOTYPE</scope>
</reference>
<comment type="function">
    <text evidence="4">Atypical bHLH transcription factor that acts as a negative regulator of a variety of shade avoidance syndrome (SAS) responses, including seedling elongation and photosynthetic pigment accumulation. Acts as a direct transcriptional repressor of two auxin-responsive genes, SAUR15 and SAUR68. May function in integrating shade and hormone transcriptional networks in response to light and auxin changes.</text>
</comment>
<comment type="subunit">
    <text evidence="1">Homodimer.</text>
</comment>
<comment type="subcellular location">
    <subcellularLocation>
        <location evidence="2 4">Nucleus</location>
    </subcellularLocation>
</comment>
<comment type="disruption phenotype">
    <text evidence="4">Slight increase in the length of hypocotyls, cotyledons and primary leaves.</text>
</comment>
<comment type="miscellaneous">
    <text evidence="6">Plants overexpressing PAR1 are dwarf with compact rosettes and inflorescences, epinastic leaves, shorter flowering stems and siliques and a general dark-green phenotype.</text>
</comment>
<comment type="similarity">
    <text evidence="5">Belongs to the bHLH protein family.</text>
</comment>
<dbReference type="EMBL" id="AM905847">
    <property type="protein sequence ID" value="CAP19901.1"/>
    <property type="molecule type" value="mRNA"/>
</dbReference>
<dbReference type="EMBL" id="AL353032">
    <property type="protein sequence ID" value="CAB88302.1"/>
    <property type="molecule type" value="Genomic_DNA"/>
</dbReference>
<dbReference type="EMBL" id="CP002686">
    <property type="protein sequence ID" value="AEE79840.1"/>
    <property type="molecule type" value="Genomic_DNA"/>
</dbReference>
<dbReference type="EMBL" id="BT011205">
    <property type="protein sequence ID" value="AAR92241.1"/>
    <property type="molecule type" value="mRNA"/>
</dbReference>
<dbReference type="EMBL" id="BT012139">
    <property type="protein sequence ID" value="AAS76234.1"/>
    <property type="molecule type" value="mRNA"/>
</dbReference>
<dbReference type="EMBL" id="AK229232">
    <property type="protein sequence ID" value="BAF01099.1"/>
    <property type="molecule type" value="mRNA"/>
</dbReference>
<dbReference type="PIR" id="T49168">
    <property type="entry name" value="T49168"/>
</dbReference>
<dbReference type="RefSeq" id="NP_191444.1">
    <property type="nucleotide sequence ID" value="NM_115747.4"/>
</dbReference>
<dbReference type="SMR" id="Q9LXR7"/>
<dbReference type="BioGRID" id="10369">
    <property type="interactions" value="2"/>
</dbReference>
<dbReference type="STRING" id="3702.Q9LXR7"/>
<dbReference type="PaxDb" id="3702-AT3G58850.1"/>
<dbReference type="EnsemblPlants" id="AT3G58850.1">
    <property type="protein sequence ID" value="AT3G58850.1"/>
    <property type="gene ID" value="AT3G58850"/>
</dbReference>
<dbReference type="GeneID" id="825054"/>
<dbReference type="Gramene" id="AT3G58850.1">
    <property type="protein sequence ID" value="AT3G58850.1"/>
    <property type="gene ID" value="AT3G58850"/>
</dbReference>
<dbReference type="KEGG" id="ath:AT3G58850"/>
<dbReference type="Araport" id="AT3G58850"/>
<dbReference type="TAIR" id="AT3G58850">
    <property type="gene designation" value="PAR2"/>
</dbReference>
<dbReference type="eggNOG" id="ENOG502S830">
    <property type="taxonomic scope" value="Eukaryota"/>
</dbReference>
<dbReference type="HOGENOM" id="CLU_111355_1_0_1"/>
<dbReference type="InParanoid" id="Q9LXR7"/>
<dbReference type="OMA" id="YEKDDMK"/>
<dbReference type="OrthoDB" id="1363133at2759"/>
<dbReference type="PhylomeDB" id="Q9LXR7"/>
<dbReference type="PRO" id="PR:Q9LXR7"/>
<dbReference type="Proteomes" id="UP000006548">
    <property type="component" value="Chromosome 3"/>
</dbReference>
<dbReference type="ExpressionAtlas" id="Q9LXR7">
    <property type="expression patterns" value="baseline and differential"/>
</dbReference>
<dbReference type="GO" id="GO:0005634">
    <property type="term" value="C:nucleus"/>
    <property type="evidence" value="ECO:0000314"/>
    <property type="project" value="TAIR"/>
</dbReference>
<dbReference type="GO" id="GO:0009742">
    <property type="term" value="P:brassinosteroid mediated signaling pathway"/>
    <property type="evidence" value="ECO:0007669"/>
    <property type="project" value="UniProtKB-KW"/>
</dbReference>
<dbReference type="GO" id="GO:0007623">
    <property type="term" value="P:circadian rhythm"/>
    <property type="evidence" value="ECO:0000270"/>
    <property type="project" value="TAIR"/>
</dbReference>
<dbReference type="GO" id="GO:0032502">
    <property type="term" value="P:developmental process"/>
    <property type="evidence" value="ECO:0000315"/>
    <property type="project" value="TAIR"/>
</dbReference>
<dbReference type="GO" id="GO:0006355">
    <property type="term" value="P:regulation of DNA-templated transcription"/>
    <property type="evidence" value="ECO:0007669"/>
    <property type="project" value="InterPro"/>
</dbReference>
<dbReference type="GO" id="GO:0009641">
    <property type="term" value="P:shade avoidance"/>
    <property type="evidence" value="ECO:0000315"/>
    <property type="project" value="TAIR"/>
</dbReference>
<dbReference type="CDD" id="cd11444">
    <property type="entry name" value="bHLH_AtIBH1_like"/>
    <property type="match status" value="1"/>
</dbReference>
<dbReference type="InterPro" id="IPR044549">
    <property type="entry name" value="bHLH_AtIBH1-like"/>
</dbReference>
<dbReference type="InterPro" id="IPR044660">
    <property type="entry name" value="IBH1-like"/>
</dbReference>
<dbReference type="PANTHER" id="PTHR33124">
    <property type="entry name" value="TRANSCRIPTION FACTOR IBH1-LIKE 1"/>
    <property type="match status" value="1"/>
</dbReference>
<dbReference type="PANTHER" id="PTHR33124:SF43">
    <property type="entry name" value="TRANSCRIPTION FACTOR PAR2"/>
    <property type="match status" value="1"/>
</dbReference>
<feature type="chain" id="PRO_0000429107" description="Transcription factor PAR2">
    <location>
        <begin position="1"/>
        <end position="118"/>
    </location>
</feature>
<feature type="domain" description="bHLH" evidence="2">
    <location>
        <begin position="43"/>
        <end position="92"/>
    </location>
</feature>
<feature type="region of interest" description="Disordered" evidence="3">
    <location>
        <begin position="1"/>
        <end position="59"/>
    </location>
</feature>
<feature type="compositionally biased region" description="Polar residues" evidence="3">
    <location>
        <begin position="19"/>
        <end position="30"/>
    </location>
</feature>
<feature type="compositionally biased region" description="Acidic residues" evidence="3">
    <location>
        <begin position="47"/>
        <end position="59"/>
    </location>
</feature>
<proteinExistence type="inferred from homology"/>
<accession>Q9LXR7</accession>
<evidence type="ECO:0000250" key="1"/>
<evidence type="ECO:0000255" key="2">
    <source>
        <dbReference type="PROSITE-ProRule" id="PRU00981"/>
    </source>
</evidence>
<evidence type="ECO:0000256" key="3">
    <source>
        <dbReference type="SAM" id="MobiDB-lite"/>
    </source>
</evidence>
<evidence type="ECO:0000269" key="4">
    <source>
    </source>
</evidence>
<evidence type="ECO:0000305" key="5"/>
<evidence type="ECO:0000305" key="6">
    <source>
    </source>
</evidence>
<keyword id="KW-1070">Brassinosteroid signaling pathway</keyword>
<keyword id="KW-0341">Growth regulation</keyword>
<keyword id="KW-0539">Nucleus</keyword>
<keyword id="KW-1185">Reference proteome</keyword>
<keyword id="KW-0678">Repressor</keyword>
<keyword id="KW-0804">Transcription</keyword>
<keyword id="KW-0805">Transcription regulation</keyword>